<evidence type="ECO:0000250" key="1"/>
<evidence type="ECO:0000250" key="2">
    <source>
        <dbReference type="UniProtKB" id="P00693"/>
    </source>
</evidence>
<evidence type="ECO:0000250" key="3">
    <source>
        <dbReference type="UniProtKB" id="P04063"/>
    </source>
</evidence>
<evidence type="ECO:0000255" key="4"/>
<evidence type="ECO:0000305" key="5"/>
<keyword id="KW-0106">Calcium</keyword>
<keyword id="KW-0119">Carbohydrate metabolism</keyword>
<keyword id="KW-0326">Glycosidase</keyword>
<keyword id="KW-0378">Hydrolase</keyword>
<keyword id="KW-0479">Metal-binding</keyword>
<keyword id="KW-1185">Reference proteome</keyword>
<keyword id="KW-0732">Signal</keyword>
<organism>
    <name type="scientific">Oryza sativa subsp. indica</name>
    <name type="common">Rice</name>
    <dbReference type="NCBI Taxonomy" id="39946"/>
    <lineage>
        <taxon>Eukaryota</taxon>
        <taxon>Viridiplantae</taxon>
        <taxon>Streptophyta</taxon>
        <taxon>Embryophyta</taxon>
        <taxon>Tracheophyta</taxon>
        <taxon>Spermatophyta</taxon>
        <taxon>Magnoliopsida</taxon>
        <taxon>Liliopsida</taxon>
        <taxon>Poales</taxon>
        <taxon>Poaceae</taxon>
        <taxon>BOP clade</taxon>
        <taxon>Oryzoideae</taxon>
        <taxon>Oryzeae</taxon>
        <taxon>Oryzinae</taxon>
        <taxon>Oryza</taxon>
        <taxon>Oryza sativa</taxon>
    </lineage>
</organism>
<reference key="1">
    <citation type="submission" date="1992-02" db="EMBL/GenBank/DDBJ databases">
        <authorList>
            <person name="Goldman S."/>
            <person name="Mawal Y."/>
            <person name="Wu R."/>
        </authorList>
    </citation>
    <scope>NUCLEOTIDE SEQUENCE [MRNA]</scope>
    <source>
        <strain>cv. IR26</strain>
        <tissue>Seed</tissue>
    </source>
</reference>
<reference key="2">
    <citation type="journal article" date="2005" name="PLoS Biol.">
        <title>The genomes of Oryza sativa: a history of duplications.</title>
        <authorList>
            <person name="Yu J."/>
            <person name="Wang J."/>
            <person name="Lin W."/>
            <person name="Li S."/>
            <person name="Li H."/>
            <person name="Zhou J."/>
            <person name="Ni P."/>
            <person name="Dong W."/>
            <person name="Hu S."/>
            <person name="Zeng C."/>
            <person name="Zhang J."/>
            <person name="Zhang Y."/>
            <person name="Li R."/>
            <person name="Xu Z."/>
            <person name="Li S."/>
            <person name="Li X."/>
            <person name="Zheng H."/>
            <person name="Cong L."/>
            <person name="Lin L."/>
            <person name="Yin J."/>
            <person name="Geng J."/>
            <person name="Li G."/>
            <person name="Shi J."/>
            <person name="Liu J."/>
            <person name="Lv H."/>
            <person name="Li J."/>
            <person name="Wang J."/>
            <person name="Deng Y."/>
            <person name="Ran L."/>
            <person name="Shi X."/>
            <person name="Wang X."/>
            <person name="Wu Q."/>
            <person name="Li C."/>
            <person name="Ren X."/>
            <person name="Wang J."/>
            <person name="Wang X."/>
            <person name="Li D."/>
            <person name="Liu D."/>
            <person name="Zhang X."/>
            <person name="Ji Z."/>
            <person name="Zhao W."/>
            <person name="Sun Y."/>
            <person name="Zhang Z."/>
            <person name="Bao J."/>
            <person name="Han Y."/>
            <person name="Dong L."/>
            <person name="Ji J."/>
            <person name="Chen P."/>
            <person name="Wu S."/>
            <person name="Liu J."/>
            <person name="Xiao Y."/>
            <person name="Bu D."/>
            <person name="Tan J."/>
            <person name="Yang L."/>
            <person name="Ye C."/>
            <person name="Zhang J."/>
            <person name="Xu J."/>
            <person name="Zhou Y."/>
            <person name="Yu Y."/>
            <person name="Zhang B."/>
            <person name="Zhuang S."/>
            <person name="Wei H."/>
            <person name="Liu B."/>
            <person name="Lei M."/>
            <person name="Yu H."/>
            <person name="Li Y."/>
            <person name="Xu H."/>
            <person name="Wei S."/>
            <person name="He X."/>
            <person name="Fang L."/>
            <person name="Zhang Z."/>
            <person name="Zhang Y."/>
            <person name="Huang X."/>
            <person name="Su Z."/>
            <person name="Tong W."/>
            <person name="Li J."/>
            <person name="Tong Z."/>
            <person name="Li S."/>
            <person name="Ye J."/>
            <person name="Wang L."/>
            <person name="Fang L."/>
            <person name="Lei T."/>
            <person name="Chen C.-S."/>
            <person name="Chen H.-C."/>
            <person name="Xu Z."/>
            <person name="Li H."/>
            <person name="Huang H."/>
            <person name="Zhang F."/>
            <person name="Xu H."/>
            <person name="Li N."/>
            <person name="Zhao C."/>
            <person name="Li S."/>
            <person name="Dong L."/>
            <person name="Huang Y."/>
            <person name="Li L."/>
            <person name="Xi Y."/>
            <person name="Qi Q."/>
            <person name="Li W."/>
            <person name="Zhang B."/>
            <person name="Hu W."/>
            <person name="Zhang Y."/>
            <person name="Tian X."/>
            <person name="Jiao Y."/>
            <person name="Liang X."/>
            <person name="Jin J."/>
            <person name="Gao L."/>
            <person name="Zheng W."/>
            <person name="Hao B."/>
            <person name="Liu S.-M."/>
            <person name="Wang W."/>
            <person name="Yuan L."/>
            <person name="Cao M."/>
            <person name="McDermott J."/>
            <person name="Samudrala R."/>
            <person name="Wang J."/>
            <person name="Wong G.K.-S."/>
            <person name="Yang H."/>
        </authorList>
    </citation>
    <scope>NUCLEOTIDE SEQUENCE [LARGE SCALE GENOMIC DNA]</scope>
    <source>
        <strain>cv. 93-11</strain>
    </source>
</reference>
<comment type="function">
    <text>Important for breakdown of endosperm starch during germination.</text>
</comment>
<comment type="catalytic activity">
    <reaction evidence="2">
        <text>Endohydrolysis of (1-&gt;4)-alpha-D-glucosidic linkages in polysaccharides containing three or more (1-&gt;4)-alpha-linked D-glucose units.</text>
        <dbReference type="EC" id="3.2.1.1"/>
    </reaction>
</comment>
<comment type="cofactor">
    <cofactor evidence="2">
        <name>Ca(2+)</name>
        <dbReference type="ChEBI" id="CHEBI:29108"/>
    </cofactor>
    <text evidence="2">Binds 3 Ca(2+) ions per subunit.</text>
</comment>
<comment type="subunit">
    <text evidence="1">Monomer.</text>
</comment>
<comment type="miscellaneous">
    <text evidence="1">Binds starch not only at the active site, but also via accessory binding sites on the protein surface that are important for efficient binding to starch granules and thereby increase enzyme activity.</text>
</comment>
<comment type="similarity">
    <text evidence="5">Belongs to the glycosyl hydrolase 13 family.</text>
</comment>
<comment type="sequence caution" evidence="5">
    <conflict type="frameshift">
        <sequence resource="EMBL-CDS" id="CAA45903"/>
    </conflict>
</comment>
<sequence>MATGRRLSMILLLLLLGLASGDKILFQGFNWESWRQSGGWYNLLMGKVDDIVAAGVTHVWLPPPSHSVSTQGYMPGRLYDLDASRYGTSMELKSLISALHGKGIQAIADVVINHRCADYKDSRGIYCIFEGGTPDGRLDWGPHMICRDDTQFSDGTGNLDTGADFAAAPDIDHLNGVVQRELTDWLLWLKSDEVGFDAWRLDFARGYSPEVAKVYIEGTTPVGLAVAELWDSMAYGGDGKPEYNQDAHRQALVDWVDRVGGTASAGMVFDFTTKGIMNTAVEGELWRLIDQQGKAPGVIGWWPAKAVTFVDNHDTGSTQQMWPFPSDKVMQGYAYILTHPGNPCIFYDHFFDWGLKEQIAALVAVRQRNGVTATSSLKIMLHDADAYVAEIDGKVVMKIGSRYDVSSLIPPGFHLAAHGNGYAVWEKSAAAAAAAADHRTSSSASL</sequence>
<protein>
    <recommendedName>
        <fullName>Alpha-amylase isozyme 2A</fullName>
        <ecNumber evidence="2">3.2.1.1</ecNumber>
    </recommendedName>
    <alternativeName>
        <fullName>1,4-alpha-D-glucan glucanohydrolase</fullName>
    </alternativeName>
    <alternativeName>
        <fullName>Alpha-amylase isozyme C2</fullName>
    </alternativeName>
</protein>
<feature type="signal peptide" evidence="4">
    <location>
        <begin position="1"/>
        <end position="21"/>
    </location>
</feature>
<feature type="chain" id="PRO_0000291430" description="Alpha-amylase isozyme 2A">
    <location>
        <begin position="22"/>
        <end position="446"/>
    </location>
</feature>
<feature type="active site" description="Nucleophile" evidence="2">
    <location>
        <position position="202"/>
    </location>
</feature>
<feature type="active site" description="Proton donor" evidence="2">
    <location>
        <position position="228"/>
    </location>
</feature>
<feature type="binding site" evidence="2">
    <location>
        <begin position="66"/>
        <end position="68"/>
    </location>
    <ligand>
        <name>substrate</name>
    </ligand>
</feature>
<feature type="binding site" evidence="2">
    <location>
        <begin position="73"/>
        <end position="74"/>
    </location>
    <ligand>
        <name>substrate</name>
    </ligand>
</feature>
<feature type="binding site" evidence="2">
    <location>
        <position position="113"/>
    </location>
    <ligand>
        <name>Ca(2+)</name>
        <dbReference type="ChEBI" id="CHEBI:29108"/>
        <label>1</label>
    </ligand>
</feature>
<feature type="binding site" evidence="2">
    <location>
        <position position="130"/>
    </location>
    <ligand>
        <name>Ca(2+)</name>
        <dbReference type="ChEBI" id="CHEBI:29108"/>
        <label>2</label>
    </ligand>
</feature>
<feature type="binding site" evidence="2">
    <location>
        <position position="133"/>
    </location>
    <ligand>
        <name>Ca(2+)</name>
        <dbReference type="ChEBI" id="CHEBI:29108"/>
        <label>2</label>
    </ligand>
</feature>
<feature type="binding site" evidence="2">
    <location>
        <position position="135"/>
    </location>
    <ligand>
        <name>Ca(2+)</name>
        <dbReference type="ChEBI" id="CHEBI:29108"/>
        <label>2</label>
    </ligand>
</feature>
<feature type="binding site" evidence="2">
    <location>
        <position position="139"/>
    </location>
    <ligand>
        <name>Ca(2+)</name>
        <dbReference type="ChEBI" id="CHEBI:29108"/>
        <label>2</label>
    </ligand>
</feature>
<feature type="binding site" evidence="2">
    <location>
        <position position="149"/>
    </location>
    <ligand>
        <name>Ca(2+)</name>
        <dbReference type="ChEBI" id="CHEBI:29108"/>
        <label>3</label>
    </ligand>
</feature>
<feature type="binding site" evidence="2">
    <location>
        <position position="160"/>
    </location>
    <ligand>
        <name>Ca(2+)</name>
        <dbReference type="ChEBI" id="CHEBI:29108"/>
        <label>1</label>
    </ligand>
</feature>
<feature type="binding site" evidence="2">
    <location>
        <position position="163"/>
    </location>
    <ligand>
        <name>Ca(2+)</name>
        <dbReference type="ChEBI" id="CHEBI:29108"/>
        <label>1</label>
    </ligand>
</feature>
<feature type="binding site" evidence="2">
    <location>
        <position position="164"/>
    </location>
    <ligand>
        <name>Ca(2+)</name>
        <dbReference type="ChEBI" id="CHEBI:29108"/>
        <label>3</label>
    </ligand>
</feature>
<feature type="binding site" evidence="2">
    <location>
        <position position="165"/>
    </location>
    <ligand>
        <name>Ca(2+)</name>
        <dbReference type="ChEBI" id="CHEBI:29108"/>
        <label>3</label>
    </ligand>
</feature>
<feature type="binding site" evidence="2">
    <location>
        <position position="168"/>
    </location>
    <ligand>
        <name>Ca(2+)</name>
        <dbReference type="ChEBI" id="CHEBI:29108"/>
        <label>3</label>
    </ligand>
</feature>
<feature type="binding site" evidence="2">
    <location>
        <position position="170"/>
    </location>
    <ligand>
        <name>Ca(2+)</name>
        <dbReference type="ChEBI" id="CHEBI:29108"/>
        <label>1</label>
    </ligand>
</feature>
<feature type="binding site" evidence="2">
    <location>
        <position position="170"/>
    </location>
    <ligand>
        <name>Ca(2+)</name>
        <dbReference type="ChEBI" id="CHEBI:29108"/>
        <label>3</label>
    </ligand>
</feature>
<feature type="binding site" evidence="2">
    <location>
        <begin position="200"/>
        <end position="205"/>
    </location>
    <ligand>
        <name>substrate</name>
    </ligand>
</feature>
<feature type="binding site" evidence="2">
    <location>
        <position position="206"/>
    </location>
    <ligand>
        <name>Ca(2+)</name>
        <dbReference type="ChEBI" id="CHEBI:29108"/>
        <label>1</label>
    </ligand>
</feature>
<feature type="binding site" evidence="2">
    <location>
        <position position="230"/>
    </location>
    <ligand>
        <name>substrate</name>
    </ligand>
</feature>
<feature type="binding site" evidence="3">
    <location>
        <position position="232"/>
    </location>
    <ligand>
        <name>substrate</name>
    </ligand>
</feature>
<feature type="binding site" evidence="2">
    <location>
        <position position="250"/>
    </location>
    <ligand>
        <name>substrate</name>
    </ligand>
</feature>
<feature type="binding site" evidence="2">
    <location>
        <position position="257"/>
    </location>
    <ligand>
        <name>substrate</name>
    </ligand>
</feature>
<feature type="binding site" evidence="2">
    <location>
        <position position="294"/>
    </location>
    <ligand>
        <name>substrate</name>
    </ligand>
</feature>
<feature type="binding site" evidence="2">
    <location>
        <begin position="300"/>
        <end position="302"/>
    </location>
    <ligand>
        <name>substrate</name>
    </ligand>
</feature>
<feature type="binding site" evidence="2">
    <location>
        <position position="313"/>
    </location>
    <ligand>
        <name>substrate</name>
    </ligand>
</feature>
<feature type="binding site" evidence="2">
    <location>
        <position position="319"/>
    </location>
    <ligand>
        <name>substrate</name>
    </ligand>
</feature>
<feature type="binding site" evidence="2">
    <location>
        <position position="398"/>
    </location>
    <ligand>
        <name>substrate</name>
    </ligand>
</feature>
<feature type="binding site" evidence="2">
    <location>
        <begin position="403"/>
        <end position="405"/>
    </location>
    <ligand>
        <name>substrate</name>
    </ligand>
</feature>
<feature type="binding site" evidence="2">
    <location>
        <begin position="415"/>
        <end position="421"/>
    </location>
    <ligand>
        <name>substrate</name>
    </ligand>
</feature>
<feature type="binding site" evidence="2">
    <location>
        <position position="425"/>
    </location>
    <ligand>
        <name>substrate</name>
    </ligand>
</feature>
<feature type="site" description="Transition state stabilizer" evidence="2">
    <location>
        <position position="314"/>
    </location>
</feature>
<feature type="sequence conflict" description="In Ref. 1; CAA45903." evidence="5" ref="1">
    <original>A</original>
    <variation>R</variation>
    <location>
        <position position="2"/>
    </location>
</feature>
<feature type="sequence conflict" description="In Ref. 1; CAA45903." evidence="5" ref="1">
    <original>AAHGNG</original>
    <variation>RPWP</variation>
    <location>
        <begin position="416"/>
        <end position="421"/>
    </location>
</feature>
<gene>
    <name type="primary">AMYC2</name>
    <name type="synonym">AMY1.5</name>
    <name type="synonym">AMY2A</name>
    <name type="ORF">OsI_023575</name>
</gene>
<accession>A2YGY2</accession>
<accession>P27935</accession>
<accession>P27941</accession>
<accession>Q5Z7T8</accession>
<proteinExistence type="evidence at transcript level"/>
<dbReference type="EC" id="3.2.1.1" evidence="2"/>
<dbReference type="EMBL" id="X64619">
    <property type="protein sequence ID" value="CAA45903.1"/>
    <property type="status" value="ALT_FRAME"/>
    <property type="molecule type" value="mRNA"/>
</dbReference>
<dbReference type="EMBL" id="CM000131">
    <property type="protein sequence ID" value="EAZ02343.1"/>
    <property type="molecule type" value="Genomic_DNA"/>
</dbReference>
<dbReference type="PIR" id="S19990">
    <property type="entry name" value="S19990"/>
</dbReference>
<dbReference type="SMR" id="A2YGY2"/>
<dbReference type="STRING" id="39946.A2YGY2"/>
<dbReference type="CAZy" id="GH13">
    <property type="family name" value="Glycoside Hydrolase Family 13"/>
</dbReference>
<dbReference type="EnsemblPlants" id="BGIOSGA023598-TA">
    <property type="protein sequence ID" value="BGIOSGA023598-PA"/>
    <property type="gene ID" value="BGIOSGA023598"/>
</dbReference>
<dbReference type="Gramene" id="BGIOSGA023598-TA">
    <property type="protein sequence ID" value="BGIOSGA023598-PA"/>
    <property type="gene ID" value="BGIOSGA023598"/>
</dbReference>
<dbReference type="HOGENOM" id="CLU_030069_1_0_1"/>
<dbReference type="OMA" id="AVWEKSA"/>
<dbReference type="Proteomes" id="UP000007015">
    <property type="component" value="Chromosome 6"/>
</dbReference>
<dbReference type="GO" id="GO:0004556">
    <property type="term" value="F:alpha-amylase activity"/>
    <property type="evidence" value="ECO:0007669"/>
    <property type="project" value="UniProtKB-EC"/>
</dbReference>
<dbReference type="GO" id="GO:0005509">
    <property type="term" value="F:calcium ion binding"/>
    <property type="evidence" value="ECO:0007669"/>
    <property type="project" value="InterPro"/>
</dbReference>
<dbReference type="GO" id="GO:0005983">
    <property type="term" value="P:starch catabolic process"/>
    <property type="evidence" value="ECO:0007669"/>
    <property type="project" value="UniProtKB-ARBA"/>
</dbReference>
<dbReference type="CDD" id="cd11314">
    <property type="entry name" value="AmyAc_arch_bac_plant_AmyA"/>
    <property type="match status" value="1"/>
</dbReference>
<dbReference type="Gene3D" id="3.20.20.80">
    <property type="entry name" value="Glycosidases"/>
    <property type="match status" value="1"/>
</dbReference>
<dbReference type="Gene3D" id="2.60.40.1180">
    <property type="entry name" value="Golgi alpha-mannosidase II"/>
    <property type="match status" value="1"/>
</dbReference>
<dbReference type="InterPro" id="IPR012850">
    <property type="entry name" value="A-amylase_bs_C"/>
</dbReference>
<dbReference type="InterPro" id="IPR013775">
    <property type="entry name" value="A-amylase_pln"/>
</dbReference>
<dbReference type="InterPro" id="IPR006046">
    <property type="entry name" value="Alpha_amylase"/>
</dbReference>
<dbReference type="InterPro" id="IPR006047">
    <property type="entry name" value="Glyco_hydro_13_cat_dom"/>
</dbReference>
<dbReference type="InterPro" id="IPR013780">
    <property type="entry name" value="Glyco_hydro_b"/>
</dbReference>
<dbReference type="InterPro" id="IPR017853">
    <property type="entry name" value="Glycoside_hydrolase_SF"/>
</dbReference>
<dbReference type="PANTHER" id="PTHR43447">
    <property type="entry name" value="ALPHA-AMYLASE"/>
    <property type="match status" value="1"/>
</dbReference>
<dbReference type="Pfam" id="PF07821">
    <property type="entry name" value="Alpha-amyl_C2"/>
    <property type="match status" value="1"/>
</dbReference>
<dbReference type="Pfam" id="PF00128">
    <property type="entry name" value="Alpha-amylase"/>
    <property type="match status" value="1"/>
</dbReference>
<dbReference type="PIRSF" id="PIRSF001028">
    <property type="entry name" value="Alph-amls_plant"/>
    <property type="match status" value="1"/>
</dbReference>
<dbReference type="PRINTS" id="PR00110">
    <property type="entry name" value="ALPHAAMYLASE"/>
</dbReference>
<dbReference type="SMART" id="SM00642">
    <property type="entry name" value="Aamy"/>
    <property type="match status" value="1"/>
</dbReference>
<dbReference type="SMART" id="SM00810">
    <property type="entry name" value="Alpha-amyl_C2"/>
    <property type="match status" value="1"/>
</dbReference>
<dbReference type="SUPFAM" id="SSF51445">
    <property type="entry name" value="(Trans)glycosidases"/>
    <property type="match status" value="1"/>
</dbReference>
<dbReference type="SUPFAM" id="SSF51011">
    <property type="entry name" value="Glycosyl hydrolase domain"/>
    <property type="match status" value="1"/>
</dbReference>
<name>AMY2A_ORYSI</name>